<organism>
    <name type="scientific">Mycobacterium sp. (strain JLS)</name>
    <dbReference type="NCBI Taxonomy" id="164757"/>
    <lineage>
        <taxon>Bacteria</taxon>
        <taxon>Bacillati</taxon>
        <taxon>Actinomycetota</taxon>
        <taxon>Actinomycetes</taxon>
        <taxon>Mycobacteriales</taxon>
        <taxon>Mycobacteriaceae</taxon>
        <taxon>Mycobacterium</taxon>
    </lineage>
</organism>
<keyword id="KW-0560">Oxidoreductase</keyword>
<feature type="chain" id="PRO_1000145419" description="Peptide methionine sulfoxide reductase MsrA">
    <location>
        <begin position="1"/>
        <end position="171"/>
    </location>
</feature>
<feature type="active site" evidence="1">
    <location>
        <position position="13"/>
    </location>
</feature>
<protein>
    <recommendedName>
        <fullName evidence="1">Peptide methionine sulfoxide reductase MsrA</fullName>
        <shortName evidence="1">Protein-methionine-S-oxide reductase</shortName>
        <ecNumber evidence="1">1.8.4.11</ecNumber>
    </recommendedName>
    <alternativeName>
        <fullName evidence="1">Peptide-methionine (S)-S-oxide reductase</fullName>
        <shortName evidence="1">Peptide Met(O) reductase</shortName>
    </alternativeName>
</protein>
<proteinExistence type="inferred from homology"/>
<name>MSRA_MYCSJ</name>
<accession>A3Q7V7</accession>
<dbReference type="EC" id="1.8.4.11" evidence="1"/>
<dbReference type="EMBL" id="CP000580">
    <property type="protein sequence ID" value="ABO01235.1"/>
    <property type="molecule type" value="Genomic_DNA"/>
</dbReference>
<dbReference type="SMR" id="A3Q7V7"/>
<dbReference type="KEGG" id="mjl:Mjls_5471"/>
<dbReference type="HOGENOM" id="CLU_031040_10_2_11"/>
<dbReference type="BioCyc" id="MSP164757:G1G8C-5533-MONOMER"/>
<dbReference type="GO" id="GO:0033744">
    <property type="term" value="F:L-methionine:thioredoxin-disulfide S-oxidoreductase activity"/>
    <property type="evidence" value="ECO:0007669"/>
    <property type="project" value="RHEA"/>
</dbReference>
<dbReference type="GO" id="GO:0008113">
    <property type="term" value="F:peptide-methionine (S)-S-oxide reductase activity"/>
    <property type="evidence" value="ECO:0007669"/>
    <property type="project" value="UniProtKB-UniRule"/>
</dbReference>
<dbReference type="GO" id="GO:0036211">
    <property type="term" value="P:protein modification process"/>
    <property type="evidence" value="ECO:0007669"/>
    <property type="project" value="UniProtKB-UniRule"/>
</dbReference>
<dbReference type="FunFam" id="3.30.1060.10:FF:000005">
    <property type="entry name" value="Peptide methionine sulfoxide reductase MsrA"/>
    <property type="match status" value="1"/>
</dbReference>
<dbReference type="Gene3D" id="3.30.1060.10">
    <property type="entry name" value="Peptide methionine sulphoxide reductase MsrA"/>
    <property type="match status" value="1"/>
</dbReference>
<dbReference type="HAMAP" id="MF_01401">
    <property type="entry name" value="MsrA"/>
    <property type="match status" value="1"/>
</dbReference>
<dbReference type="InterPro" id="IPR002569">
    <property type="entry name" value="Met_Sox_Rdtase_MsrA_dom"/>
</dbReference>
<dbReference type="InterPro" id="IPR036509">
    <property type="entry name" value="Met_Sox_Rdtase_MsrA_sf"/>
</dbReference>
<dbReference type="NCBIfam" id="TIGR00401">
    <property type="entry name" value="msrA"/>
    <property type="match status" value="1"/>
</dbReference>
<dbReference type="PANTHER" id="PTHR43774">
    <property type="entry name" value="PEPTIDE METHIONINE SULFOXIDE REDUCTASE"/>
    <property type="match status" value="1"/>
</dbReference>
<dbReference type="PANTHER" id="PTHR43774:SF1">
    <property type="entry name" value="PEPTIDE METHIONINE SULFOXIDE REDUCTASE MSRA 2"/>
    <property type="match status" value="1"/>
</dbReference>
<dbReference type="Pfam" id="PF01625">
    <property type="entry name" value="PMSR"/>
    <property type="match status" value="1"/>
</dbReference>
<dbReference type="SUPFAM" id="SSF55068">
    <property type="entry name" value="Peptide methionine sulfoxide reductase"/>
    <property type="match status" value="1"/>
</dbReference>
<evidence type="ECO:0000255" key="1">
    <source>
        <dbReference type="HAMAP-Rule" id="MF_01401"/>
    </source>
</evidence>
<reference key="1">
    <citation type="submission" date="2007-02" db="EMBL/GenBank/DDBJ databases">
        <title>Complete sequence of Mycobacterium sp. JLS.</title>
        <authorList>
            <consortium name="US DOE Joint Genome Institute"/>
            <person name="Copeland A."/>
            <person name="Lucas S."/>
            <person name="Lapidus A."/>
            <person name="Barry K."/>
            <person name="Detter J.C."/>
            <person name="Glavina del Rio T."/>
            <person name="Hammon N."/>
            <person name="Israni S."/>
            <person name="Dalin E."/>
            <person name="Tice H."/>
            <person name="Pitluck S."/>
            <person name="Chain P."/>
            <person name="Malfatti S."/>
            <person name="Shin M."/>
            <person name="Vergez L."/>
            <person name="Schmutz J."/>
            <person name="Larimer F."/>
            <person name="Land M."/>
            <person name="Hauser L."/>
            <person name="Kyrpides N."/>
            <person name="Mikhailova N."/>
            <person name="Miller C.D."/>
            <person name="Anderson A.J."/>
            <person name="Sims R.C."/>
            <person name="Richardson P."/>
        </authorList>
    </citation>
    <scope>NUCLEOTIDE SEQUENCE [LARGE SCALE GENOMIC DNA]</scope>
    <source>
        <strain>JLS</strain>
    </source>
</reference>
<sequence length="171" mass="19429">MSDHKKAILAGGCFWGMQDLIRKQPGVVSTRVGYTGGQNDHPTYRNHPGHAESIEITYDPAQTDYRALLEFFFQIHDPTTKNRQGNDVGTSYRSAIFYVDDDQKRVALDTIADVDASGLWPGKVVTEVTPAGEFWEAEPEHQDYLERMPWGYTCHFPRPDWKLPKRADAKA</sequence>
<comment type="function">
    <text evidence="1">Has an important function as a repair enzyme for proteins that have been inactivated by oxidation. Catalyzes the reversible oxidation-reduction of methionine sulfoxide in proteins to methionine.</text>
</comment>
<comment type="catalytic activity">
    <reaction evidence="1">
        <text>L-methionyl-[protein] + [thioredoxin]-disulfide + H2O = L-methionyl-(S)-S-oxide-[protein] + [thioredoxin]-dithiol</text>
        <dbReference type="Rhea" id="RHEA:14217"/>
        <dbReference type="Rhea" id="RHEA-COMP:10698"/>
        <dbReference type="Rhea" id="RHEA-COMP:10700"/>
        <dbReference type="Rhea" id="RHEA-COMP:12313"/>
        <dbReference type="Rhea" id="RHEA-COMP:12315"/>
        <dbReference type="ChEBI" id="CHEBI:15377"/>
        <dbReference type="ChEBI" id="CHEBI:16044"/>
        <dbReference type="ChEBI" id="CHEBI:29950"/>
        <dbReference type="ChEBI" id="CHEBI:44120"/>
        <dbReference type="ChEBI" id="CHEBI:50058"/>
        <dbReference type="EC" id="1.8.4.11"/>
    </reaction>
</comment>
<comment type="catalytic activity">
    <reaction evidence="1">
        <text>[thioredoxin]-disulfide + L-methionine + H2O = L-methionine (S)-S-oxide + [thioredoxin]-dithiol</text>
        <dbReference type="Rhea" id="RHEA:19993"/>
        <dbReference type="Rhea" id="RHEA-COMP:10698"/>
        <dbReference type="Rhea" id="RHEA-COMP:10700"/>
        <dbReference type="ChEBI" id="CHEBI:15377"/>
        <dbReference type="ChEBI" id="CHEBI:29950"/>
        <dbReference type="ChEBI" id="CHEBI:50058"/>
        <dbReference type="ChEBI" id="CHEBI:57844"/>
        <dbReference type="ChEBI" id="CHEBI:58772"/>
        <dbReference type="EC" id="1.8.4.11"/>
    </reaction>
</comment>
<comment type="similarity">
    <text evidence="1">Belongs to the MsrA Met sulfoxide reductase family.</text>
</comment>
<gene>
    <name evidence="1" type="primary">msrA</name>
    <name type="ordered locus">Mjls_5471</name>
</gene>